<keyword id="KW-0963">Cytoplasm</keyword>
<keyword id="KW-0488">Methylation</keyword>
<keyword id="KW-0648">Protein biosynthesis</keyword>
<keyword id="KW-1185">Reference proteome</keyword>
<dbReference type="EMBL" id="CP001013">
    <property type="protein sequence ID" value="ACB32855.1"/>
    <property type="molecule type" value="Genomic_DNA"/>
</dbReference>
<dbReference type="RefSeq" id="WP_012345617.1">
    <property type="nucleotide sequence ID" value="NC_010524.1"/>
</dbReference>
<dbReference type="SMR" id="B1XYX1"/>
<dbReference type="STRING" id="395495.Lcho_0580"/>
<dbReference type="KEGG" id="lch:Lcho_0580"/>
<dbReference type="eggNOG" id="COG0216">
    <property type="taxonomic scope" value="Bacteria"/>
</dbReference>
<dbReference type="HOGENOM" id="CLU_036856_0_1_4"/>
<dbReference type="OrthoDB" id="9806673at2"/>
<dbReference type="Proteomes" id="UP000001693">
    <property type="component" value="Chromosome"/>
</dbReference>
<dbReference type="GO" id="GO:0005737">
    <property type="term" value="C:cytoplasm"/>
    <property type="evidence" value="ECO:0007669"/>
    <property type="project" value="UniProtKB-SubCell"/>
</dbReference>
<dbReference type="GO" id="GO:0016149">
    <property type="term" value="F:translation release factor activity, codon specific"/>
    <property type="evidence" value="ECO:0007669"/>
    <property type="project" value="UniProtKB-UniRule"/>
</dbReference>
<dbReference type="FunFam" id="3.30.160.20:FF:000004">
    <property type="entry name" value="Peptide chain release factor 1"/>
    <property type="match status" value="1"/>
</dbReference>
<dbReference type="FunFam" id="3.30.70.1660:FF:000002">
    <property type="entry name" value="Peptide chain release factor 1"/>
    <property type="match status" value="1"/>
</dbReference>
<dbReference type="FunFam" id="3.30.70.1660:FF:000004">
    <property type="entry name" value="Peptide chain release factor 1"/>
    <property type="match status" value="1"/>
</dbReference>
<dbReference type="Gene3D" id="3.30.160.20">
    <property type="match status" value="1"/>
</dbReference>
<dbReference type="Gene3D" id="3.30.70.1660">
    <property type="match status" value="1"/>
</dbReference>
<dbReference type="Gene3D" id="6.10.140.1950">
    <property type="match status" value="1"/>
</dbReference>
<dbReference type="HAMAP" id="MF_00093">
    <property type="entry name" value="Rel_fac_1"/>
    <property type="match status" value="1"/>
</dbReference>
<dbReference type="InterPro" id="IPR005139">
    <property type="entry name" value="PCRF"/>
</dbReference>
<dbReference type="InterPro" id="IPR000352">
    <property type="entry name" value="Pep_chain_release_fac_I"/>
</dbReference>
<dbReference type="InterPro" id="IPR045853">
    <property type="entry name" value="Pep_chain_release_fac_I_sf"/>
</dbReference>
<dbReference type="InterPro" id="IPR050057">
    <property type="entry name" value="Prokaryotic/Mito_RF"/>
</dbReference>
<dbReference type="InterPro" id="IPR004373">
    <property type="entry name" value="RF-1"/>
</dbReference>
<dbReference type="NCBIfam" id="TIGR00019">
    <property type="entry name" value="prfA"/>
    <property type="match status" value="1"/>
</dbReference>
<dbReference type="NCBIfam" id="NF001859">
    <property type="entry name" value="PRK00591.1"/>
    <property type="match status" value="1"/>
</dbReference>
<dbReference type="PANTHER" id="PTHR43804">
    <property type="entry name" value="LD18447P"/>
    <property type="match status" value="1"/>
</dbReference>
<dbReference type="PANTHER" id="PTHR43804:SF7">
    <property type="entry name" value="LD18447P"/>
    <property type="match status" value="1"/>
</dbReference>
<dbReference type="Pfam" id="PF03462">
    <property type="entry name" value="PCRF"/>
    <property type="match status" value="1"/>
</dbReference>
<dbReference type="Pfam" id="PF00472">
    <property type="entry name" value="RF-1"/>
    <property type="match status" value="1"/>
</dbReference>
<dbReference type="SMART" id="SM00937">
    <property type="entry name" value="PCRF"/>
    <property type="match status" value="1"/>
</dbReference>
<dbReference type="SUPFAM" id="SSF75620">
    <property type="entry name" value="Release factor"/>
    <property type="match status" value="1"/>
</dbReference>
<dbReference type="PROSITE" id="PS00745">
    <property type="entry name" value="RF_PROK_I"/>
    <property type="match status" value="1"/>
</dbReference>
<name>RF1_LEPCP</name>
<evidence type="ECO:0000255" key="1">
    <source>
        <dbReference type="HAMAP-Rule" id="MF_00093"/>
    </source>
</evidence>
<gene>
    <name evidence="1" type="primary">prfA</name>
    <name type="ordered locus">Lcho_0580</name>
</gene>
<reference key="1">
    <citation type="submission" date="2008-03" db="EMBL/GenBank/DDBJ databases">
        <title>Complete sequence of Leptothrix cholodnii SP-6.</title>
        <authorList>
            <consortium name="US DOE Joint Genome Institute"/>
            <person name="Copeland A."/>
            <person name="Lucas S."/>
            <person name="Lapidus A."/>
            <person name="Glavina del Rio T."/>
            <person name="Dalin E."/>
            <person name="Tice H."/>
            <person name="Bruce D."/>
            <person name="Goodwin L."/>
            <person name="Pitluck S."/>
            <person name="Chertkov O."/>
            <person name="Brettin T."/>
            <person name="Detter J.C."/>
            <person name="Han C."/>
            <person name="Kuske C.R."/>
            <person name="Schmutz J."/>
            <person name="Larimer F."/>
            <person name="Land M."/>
            <person name="Hauser L."/>
            <person name="Kyrpides N."/>
            <person name="Lykidis A."/>
            <person name="Emerson D."/>
            <person name="Richardson P."/>
        </authorList>
    </citation>
    <scope>NUCLEOTIDE SEQUENCE [LARGE SCALE GENOMIC DNA]</scope>
    <source>
        <strain>ATCC 51168 / LMG 8142 / SP-6</strain>
    </source>
</reference>
<sequence length="360" mass="39585">MTPFLRQQLSRQALRLAEIDAALADPKVCSQIGTLRSLNREHARVSALVDRWQRYEQREQDLAGAQELLDEPEMAELARAEIGAAQADLDRLDSELLTALMPRDADDDRNAFVEIRAGTGGEESALFAADLARMYLRHAERRGWKTELMSESVSDLGGYKDVVLHIIGDAVFEALKYESGGHRVQRVPATEAQGRIHTSACTVAVLAEADEAEEVSLNPAELRIDTYRASGAGGQHINKTDSAVRVTHLPTGLVAECQDDRSQHRNKARALAVLAARLRDRVRQEQAAKDAAARKSLIGSGDRSDRIRTYNFPQGRLTDHRINLTLYKLGAVLEGDLDEVIGALQAAHAAEQLAELETQA</sequence>
<organism>
    <name type="scientific">Leptothrix cholodnii (strain ATCC 51168 / LMG 8142 / SP-6)</name>
    <name type="common">Leptothrix discophora (strain SP-6)</name>
    <dbReference type="NCBI Taxonomy" id="395495"/>
    <lineage>
        <taxon>Bacteria</taxon>
        <taxon>Pseudomonadati</taxon>
        <taxon>Pseudomonadota</taxon>
        <taxon>Betaproteobacteria</taxon>
        <taxon>Burkholderiales</taxon>
        <taxon>Sphaerotilaceae</taxon>
        <taxon>Leptothrix</taxon>
    </lineage>
</organism>
<comment type="function">
    <text evidence="1">Peptide chain release factor 1 directs the termination of translation in response to the peptide chain termination codons UAG and UAA.</text>
</comment>
<comment type="subcellular location">
    <subcellularLocation>
        <location evidence="1">Cytoplasm</location>
    </subcellularLocation>
</comment>
<comment type="PTM">
    <text evidence="1">Methylated by PrmC. Methylation increases the termination efficiency of RF1.</text>
</comment>
<comment type="similarity">
    <text evidence="1">Belongs to the prokaryotic/mitochondrial release factor family.</text>
</comment>
<proteinExistence type="inferred from homology"/>
<protein>
    <recommendedName>
        <fullName evidence="1">Peptide chain release factor 1</fullName>
        <shortName evidence="1">RF-1</shortName>
    </recommendedName>
</protein>
<accession>B1XYX1</accession>
<feature type="chain" id="PRO_1000093472" description="Peptide chain release factor 1">
    <location>
        <begin position="1"/>
        <end position="360"/>
    </location>
</feature>
<feature type="modified residue" description="N5-methylglutamine" evidence="1">
    <location>
        <position position="235"/>
    </location>
</feature>